<name>PR3B1_MOUSE</name>
<organism>
    <name type="scientific">Mus musculus</name>
    <name type="common">Mouse</name>
    <dbReference type="NCBI Taxonomy" id="10090"/>
    <lineage>
        <taxon>Eukaryota</taxon>
        <taxon>Metazoa</taxon>
        <taxon>Chordata</taxon>
        <taxon>Craniata</taxon>
        <taxon>Vertebrata</taxon>
        <taxon>Euteleostomi</taxon>
        <taxon>Mammalia</taxon>
        <taxon>Eutheria</taxon>
        <taxon>Euarchontoglires</taxon>
        <taxon>Glires</taxon>
        <taxon>Rodentia</taxon>
        <taxon>Myomorpha</taxon>
        <taxon>Muroidea</taxon>
        <taxon>Muridae</taxon>
        <taxon>Murinae</taxon>
        <taxon>Mus</taxon>
        <taxon>Mus</taxon>
    </lineage>
</organism>
<reference key="1">
    <citation type="journal article" date="1986" name="Proc. Natl. Acad. Sci. U.S.A.">
        <title>Molecular cloning of mouse placental lactogen cDNA.</title>
        <authorList>
            <person name="Jackson L.L."/>
            <person name="Colosi P."/>
            <person name="Talamantes F."/>
            <person name="Linzer D.I.H."/>
        </authorList>
    </citation>
    <scope>NUCLEOTIDE SEQUENCE [MRNA]</scope>
</reference>
<reference key="2">
    <citation type="journal article" date="1992" name="Proc. Natl. Acad. Sci. U.S.A.">
        <title>Placental-specific expression from the mouse placental lactogen II gene promoter.</title>
        <authorList>
            <person name="Shida M.M."/>
            <person name="Jackson-Grusby L.L."/>
            <person name="Ross S.R."/>
            <person name="Linzer D.I.H."/>
        </authorList>
    </citation>
    <scope>NUCLEOTIDE SEQUENCE [GENOMIC DNA]</scope>
</reference>
<reference key="3">
    <citation type="journal article" date="1985" name="Proc. Natl. Acad. Sci. U.S.A.">
        <title>Identification of proliferin mRNA and protein in mouse placenta.</title>
        <authorList>
            <person name="Linzer D.I.H."/>
            <person name="Lee S.-J."/>
            <person name="Ogren L."/>
            <person name="Talamantes F."/>
            <person name="Nathans D."/>
        </authorList>
    </citation>
    <scope>PROTEIN SEQUENCE OF 32-50</scope>
</reference>
<evidence type="ECO:0000250" key="1"/>
<evidence type="ECO:0000269" key="2">
    <source>
    </source>
</evidence>
<evidence type="ECO:0000305" key="3"/>
<keyword id="KW-0903">Direct protein sequencing</keyword>
<keyword id="KW-1015">Disulfide bond</keyword>
<keyword id="KW-0372">Hormone</keyword>
<keyword id="KW-1185">Reference proteome</keyword>
<keyword id="KW-0964">Secreted</keyword>
<keyword id="KW-0732">Signal</keyword>
<protein>
    <recommendedName>
        <fullName>Prolactin-3B1</fullName>
    </recommendedName>
    <alternativeName>
        <fullName>Chorionic somatomammotropin hormone 2</fullName>
    </alternativeName>
    <alternativeName>
        <fullName>Placental lactogen II</fullName>
        <shortName>PL-II</shortName>
    </alternativeName>
</protein>
<feature type="signal peptide" evidence="2">
    <location>
        <begin position="1"/>
        <end position="31"/>
    </location>
</feature>
<feature type="chain" id="PRO_0000032961" description="Prolactin-3B1">
    <location>
        <begin position="32"/>
        <end position="222"/>
    </location>
</feature>
<feature type="disulfide bond" evidence="1">
    <location>
        <begin position="82"/>
        <end position="197"/>
    </location>
</feature>
<feature type="disulfide bond" evidence="1">
    <location>
        <begin position="214"/>
        <end position="222"/>
    </location>
</feature>
<feature type="sequence conflict" description="In Ref. 2; AAA75165." evidence="3" ref="2">
    <location>
        <begin position="101"/>
        <end position="160"/>
    </location>
</feature>
<gene>
    <name type="primary">Prl3b1</name>
    <name type="synonym">Csh2</name>
    <name type="synonym">Pl-2</name>
    <name type="synonym">Pl2</name>
</gene>
<accession>P09586</accession>
<comment type="subcellular location">
    <subcellularLocation>
        <location>Secreted</location>
    </subcellularLocation>
</comment>
<comment type="developmental stage">
    <text>Placental lactogen I is expressed in mid-pregnancy, while placental lactogen II is expressed throughout the later half of pregnancy.</text>
</comment>
<comment type="similarity">
    <text evidence="3">Belongs to the somatotropin/prolactin family.</text>
</comment>
<proteinExistence type="evidence at protein level"/>
<sequence length="222" mass="25159">MKLSLSQPCSFSGALLLLAVSNLLVWEKVTSLPNYRLPTESLYQRVIVVSHNAHDLASKAFMEFEMKFGRTAWTYGLMLSPCHTAAILTPENSEQVHQTTSEDLLKVSITILQAWEEPLKHMVAAVAALPHVPDTLLSRTKELEERIQGLLEGLKIIFNRVYPGAVASDYTFWSAWSDLQSSDESTKNSALRTLWRCVRRDTHKVDNYLKVLKCRDVHNNNC</sequence>
<dbReference type="EMBL" id="M14647">
    <property type="protein sequence ID" value="AAA39947.1"/>
    <property type="molecule type" value="mRNA"/>
</dbReference>
<dbReference type="EMBL" id="M85066">
    <property type="protein sequence ID" value="AAA75165.1"/>
    <property type="molecule type" value="Genomic_DNA"/>
</dbReference>
<dbReference type="EMBL" id="M85062">
    <property type="protein sequence ID" value="AAA75165.1"/>
    <property type="status" value="JOINED"/>
    <property type="molecule type" value="Genomic_DNA"/>
</dbReference>
<dbReference type="EMBL" id="M85063">
    <property type="protein sequence ID" value="AAA75165.1"/>
    <property type="status" value="JOINED"/>
    <property type="molecule type" value="Genomic_DNA"/>
</dbReference>
<dbReference type="EMBL" id="M85064">
    <property type="protein sequence ID" value="AAA75165.1"/>
    <property type="status" value="JOINED"/>
    <property type="molecule type" value="Genomic_DNA"/>
</dbReference>
<dbReference type="CCDS" id="CCDS26393.1"/>
<dbReference type="PIR" id="A44090">
    <property type="entry name" value="A26489"/>
</dbReference>
<dbReference type="RefSeq" id="NP_032891.1">
    <property type="nucleotide sequence ID" value="NM_008865.4"/>
</dbReference>
<dbReference type="SMR" id="P09586"/>
<dbReference type="FunCoup" id="P09586">
    <property type="interactions" value="278"/>
</dbReference>
<dbReference type="STRING" id="10090.ENSMUSP00000047680"/>
<dbReference type="PaxDb" id="10090-ENSMUSP00000047680"/>
<dbReference type="PeptideAtlas" id="P09586"/>
<dbReference type="DNASU" id="18776"/>
<dbReference type="Ensembl" id="ENSMUST00000035273.4">
    <property type="protein sequence ID" value="ENSMUSP00000047680.3"/>
    <property type="gene ID" value="ENSMUSG00000038891.4"/>
</dbReference>
<dbReference type="GeneID" id="18776"/>
<dbReference type="KEGG" id="mmu:18776"/>
<dbReference type="UCSC" id="uc007pxi.1">
    <property type="organism name" value="mouse"/>
</dbReference>
<dbReference type="AGR" id="MGI:97607"/>
<dbReference type="CTD" id="18776"/>
<dbReference type="MGI" id="MGI:97607">
    <property type="gene designation" value="Prl3b1"/>
</dbReference>
<dbReference type="VEuPathDB" id="HostDB:ENSMUSG00000038891"/>
<dbReference type="eggNOG" id="ENOG502QYU3">
    <property type="taxonomic scope" value="Eukaryota"/>
</dbReference>
<dbReference type="GeneTree" id="ENSGT00950000182818"/>
<dbReference type="HOGENOM" id="CLU_088274_0_1_1"/>
<dbReference type="InParanoid" id="P09586"/>
<dbReference type="OMA" id="ICANHNT"/>
<dbReference type="OrthoDB" id="9946219at2759"/>
<dbReference type="PhylomeDB" id="P09586"/>
<dbReference type="TreeFam" id="TF332592"/>
<dbReference type="BioGRID-ORCS" id="18776">
    <property type="hits" value="0 hits in 77 CRISPR screens"/>
</dbReference>
<dbReference type="ChiTaRS" id="Prl3b1">
    <property type="organism name" value="mouse"/>
</dbReference>
<dbReference type="PRO" id="PR:P09586"/>
<dbReference type="Proteomes" id="UP000000589">
    <property type="component" value="Chromosome 13"/>
</dbReference>
<dbReference type="RNAct" id="P09586">
    <property type="molecule type" value="protein"/>
</dbReference>
<dbReference type="Bgee" id="ENSMUSG00000038891">
    <property type="expression patterns" value="Expressed in placenta labyrinth and 63 other cell types or tissues"/>
</dbReference>
<dbReference type="ExpressionAtlas" id="P09586">
    <property type="expression patterns" value="baseline and differential"/>
</dbReference>
<dbReference type="GO" id="GO:0005615">
    <property type="term" value="C:extracellular space"/>
    <property type="evidence" value="ECO:0000314"/>
    <property type="project" value="MGI"/>
</dbReference>
<dbReference type="GO" id="GO:0005179">
    <property type="term" value="F:hormone activity"/>
    <property type="evidence" value="ECO:0007669"/>
    <property type="project" value="UniProtKB-KW"/>
</dbReference>
<dbReference type="CDD" id="cd10288">
    <property type="entry name" value="prolactin_like"/>
    <property type="match status" value="1"/>
</dbReference>
<dbReference type="FunFam" id="1.20.1250.10:FF:000043">
    <property type="entry name" value="Growth hormone d5"/>
    <property type="match status" value="1"/>
</dbReference>
<dbReference type="Gene3D" id="1.20.1250.10">
    <property type="match status" value="1"/>
</dbReference>
<dbReference type="InterPro" id="IPR009079">
    <property type="entry name" value="4_helix_cytokine-like_core"/>
</dbReference>
<dbReference type="InterPro" id="IPR001400">
    <property type="entry name" value="Somatotropin/Prolactin"/>
</dbReference>
<dbReference type="InterPro" id="IPR018116">
    <property type="entry name" value="Somatotropin_CS"/>
</dbReference>
<dbReference type="PANTHER" id="PTHR11417:SF37">
    <property type="entry name" value="PROLACTIN-3B1"/>
    <property type="match status" value="1"/>
</dbReference>
<dbReference type="PANTHER" id="PTHR11417">
    <property type="entry name" value="SOMATOTROPIN,PROLACTIN"/>
    <property type="match status" value="1"/>
</dbReference>
<dbReference type="Pfam" id="PF00103">
    <property type="entry name" value="Hormone_1"/>
    <property type="match status" value="1"/>
</dbReference>
<dbReference type="PRINTS" id="PR00836">
    <property type="entry name" value="SOMATOTROPIN"/>
</dbReference>
<dbReference type="SUPFAM" id="SSF47266">
    <property type="entry name" value="4-helical cytokines"/>
    <property type="match status" value="1"/>
</dbReference>
<dbReference type="PROSITE" id="PS00266">
    <property type="entry name" value="SOMATOTROPIN_1"/>
    <property type="match status" value="1"/>
</dbReference>
<dbReference type="PROSITE" id="PS00338">
    <property type="entry name" value="SOMATOTROPIN_2"/>
    <property type="match status" value="1"/>
</dbReference>